<name>AMPA_EDWI9</name>
<comment type="function">
    <text evidence="1">Presumably involved in the processing and regular turnover of intracellular proteins. Catalyzes the removal of unsubstituted N-terminal amino acids from various peptides.</text>
</comment>
<comment type="catalytic activity">
    <reaction evidence="1">
        <text>Release of an N-terminal amino acid, Xaa-|-Yaa-, in which Xaa is preferably Leu, but may be other amino acids including Pro although not Arg or Lys, and Yaa may be Pro. Amino acid amides and methyl esters are also readily hydrolyzed, but rates on arylamides are exceedingly low.</text>
        <dbReference type="EC" id="3.4.11.1"/>
    </reaction>
</comment>
<comment type="catalytic activity">
    <reaction evidence="1">
        <text>Release of an N-terminal amino acid, preferentially leucine, but not glutamic or aspartic acids.</text>
        <dbReference type="EC" id="3.4.11.10"/>
    </reaction>
</comment>
<comment type="cofactor">
    <cofactor evidence="1">
        <name>Mn(2+)</name>
        <dbReference type="ChEBI" id="CHEBI:29035"/>
    </cofactor>
    <text evidence="1">Binds 2 manganese ions per subunit.</text>
</comment>
<comment type="subcellular location">
    <subcellularLocation>
        <location evidence="1">Cytoplasm</location>
    </subcellularLocation>
</comment>
<comment type="similarity">
    <text evidence="1">Belongs to the peptidase M17 family.</text>
</comment>
<feature type="chain" id="PRO_1000203827" description="Probable cytosol aminopeptidase">
    <location>
        <begin position="1"/>
        <end position="503"/>
    </location>
</feature>
<feature type="active site" evidence="1">
    <location>
        <position position="282"/>
    </location>
</feature>
<feature type="active site" evidence="1">
    <location>
        <position position="356"/>
    </location>
</feature>
<feature type="binding site" evidence="1">
    <location>
        <position position="270"/>
    </location>
    <ligand>
        <name>Mn(2+)</name>
        <dbReference type="ChEBI" id="CHEBI:29035"/>
        <label>2</label>
    </ligand>
</feature>
<feature type="binding site" evidence="1">
    <location>
        <position position="275"/>
    </location>
    <ligand>
        <name>Mn(2+)</name>
        <dbReference type="ChEBI" id="CHEBI:29035"/>
        <label>1</label>
    </ligand>
</feature>
<feature type="binding site" evidence="1">
    <location>
        <position position="275"/>
    </location>
    <ligand>
        <name>Mn(2+)</name>
        <dbReference type="ChEBI" id="CHEBI:29035"/>
        <label>2</label>
    </ligand>
</feature>
<feature type="binding site" evidence="1">
    <location>
        <position position="293"/>
    </location>
    <ligand>
        <name>Mn(2+)</name>
        <dbReference type="ChEBI" id="CHEBI:29035"/>
        <label>2</label>
    </ligand>
</feature>
<feature type="binding site" evidence="1">
    <location>
        <position position="352"/>
    </location>
    <ligand>
        <name>Mn(2+)</name>
        <dbReference type="ChEBI" id="CHEBI:29035"/>
        <label>1</label>
    </ligand>
</feature>
<feature type="binding site" evidence="1">
    <location>
        <position position="354"/>
    </location>
    <ligand>
        <name>Mn(2+)</name>
        <dbReference type="ChEBI" id="CHEBI:29035"/>
        <label>1</label>
    </ligand>
</feature>
<feature type="binding site" evidence="1">
    <location>
        <position position="354"/>
    </location>
    <ligand>
        <name>Mn(2+)</name>
        <dbReference type="ChEBI" id="CHEBI:29035"/>
        <label>2</label>
    </ligand>
</feature>
<reference key="1">
    <citation type="submission" date="2009-03" db="EMBL/GenBank/DDBJ databases">
        <title>Complete genome sequence of Edwardsiella ictaluri 93-146.</title>
        <authorList>
            <person name="Williams M.L."/>
            <person name="Gillaspy A.F."/>
            <person name="Dyer D.W."/>
            <person name="Thune R.L."/>
            <person name="Waldbieser G.C."/>
            <person name="Schuster S.C."/>
            <person name="Gipson J."/>
            <person name="Zaitshik J."/>
            <person name="Landry C."/>
            <person name="Lawrence M.L."/>
        </authorList>
    </citation>
    <scope>NUCLEOTIDE SEQUENCE [LARGE SCALE GENOMIC DNA]</scope>
    <source>
        <strain>93-146</strain>
    </source>
</reference>
<sequence>MEFSVKSGSPEKQRSACIVVGVFEPRRLSPIAEQLDKISDGYISALLRRGELEGKVGQTLLLHHVPNVLSERILLIGCGKERELDERQYKQVVQKTINTLNDTGSMEAVCFLTELHVKGRNTYWKVRQAVETAKETLYTFDQLKSNKVEARRPLRKMVFNVPTRRELTSGERAIQHGLAIAAGIKAAKDLGNMPPNICNAGYLASQARQLADNYAGAVTTRVIGEQQMKELGMNAYLAVGQGSQNESLMSVIEYKGNPNPDARPIVLVGKGLTFDAGGISLKPGEGMDEMKYDMCGAASVYGVMRMAAELRLPLNIVGVLAGCENMPGGRAYRPGDILTTMSGQTVEVLNTDAEGRLVLCDVLTYVERFEPELVVDVATLTGACVIALGHHLTGLMANHNPLASELLNAAEQAGDRAWRLPLGEEFQEQLDSNFADMANIGGRPGGAITAACFLARFTRKYNWAHLDIAGTAWRSGKAKGATGRPVAMLSQFLLNRAGLNGEE</sequence>
<proteinExistence type="inferred from homology"/>
<protein>
    <recommendedName>
        <fullName evidence="1">Probable cytosol aminopeptidase</fullName>
        <ecNumber evidence="1">3.4.11.1</ecNumber>
    </recommendedName>
    <alternativeName>
        <fullName evidence="1">Leucine aminopeptidase</fullName>
        <shortName evidence="1">LAP</shortName>
        <ecNumber evidence="1">3.4.11.10</ecNumber>
    </alternativeName>
    <alternativeName>
        <fullName evidence="1">Leucyl aminopeptidase</fullName>
    </alternativeName>
</protein>
<gene>
    <name evidence="1" type="primary">pepA</name>
    <name type="ordered locus">NT01EI_3455</name>
</gene>
<keyword id="KW-0031">Aminopeptidase</keyword>
<keyword id="KW-0963">Cytoplasm</keyword>
<keyword id="KW-0378">Hydrolase</keyword>
<keyword id="KW-0464">Manganese</keyword>
<keyword id="KW-0479">Metal-binding</keyword>
<keyword id="KW-0645">Protease</keyword>
<accession>C5BBY4</accession>
<dbReference type="EC" id="3.4.11.1" evidence="1"/>
<dbReference type="EC" id="3.4.11.10" evidence="1"/>
<dbReference type="EMBL" id="CP001600">
    <property type="protein sequence ID" value="ACR70591.1"/>
    <property type="molecule type" value="Genomic_DNA"/>
</dbReference>
<dbReference type="RefSeq" id="WP_015872664.1">
    <property type="nucleotide sequence ID" value="NZ_CP169062.1"/>
</dbReference>
<dbReference type="SMR" id="C5BBY4"/>
<dbReference type="STRING" id="67780.B6E78_08915"/>
<dbReference type="MEROPS" id="M17.003"/>
<dbReference type="KEGG" id="eic:NT01EI_3455"/>
<dbReference type="PATRIC" id="fig|634503.3.peg.3074"/>
<dbReference type="HOGENOM" id="CLU_013734_0_0_6"/>
<dbReference type="OrthoDB" id="9809354at2"/>
<dbReference type="Proteomes" id="UP000001485">
    <property type="component" value="Chromosome"/>
</dbReference>
<dbReference type="GO" id="GO:0005737">
    <property type="term" value="C:cytoplasm"/>
    <property type="evidence" value="ECO:0007669"/>
    <property type="project" value="UniProtKB-SubCell"/>
</dbReference>
<dbReference type="GO" id="GO:0030145">
    <property type="term" value="F:manganese ion binding"/>
    <property type="evidence" value="ECO:0007669"/>
    <property type="project" value="UniProtKB-UniRule"/>
</dbReference>
<dbReference type="GO" id="GO:0070006">
    <property type="term" value="F:metalloaminopeptidase activity"/>
    <property type="evidence" value="ECO:0007669"/>
    <property type="project" value="InterPro"/>
</dbReference>
<dbReference type="GO" id="GO:0006508">
    <property type="term" value="P:proteolysis"/>
    <property type="evidence" value="ECO:0007669"/>
    <property type="project" value="UniProtKB-KW"/>
</dbReference>
<dbReference type="CDD" id="cd00433">
    <property type="entry name" value="Peptidase_M17"/>
    <property type="match status" value="1"/>
</dbReference>
<dbReference type="FunFam" id="3.40.220.10:FF:000001">
    <property type="entry name" value="Probable cytosol aminopeptidase"/>
    <property type="match status" value="1"/>
</dbReference>
<dbReference type="FunFam" id="3.40.630.10:FF:000004">
    <property type="entry name" value="Probable cytosol aminopeptidase"/>
    <property type="match status" value="1"/>
</dbReference>
<dbReference type="Gene3D" id="3.40.220.10">
    <property type="entry name" value="Leucine Aminopeptidase, subunit E, domain 1"/>
    <property type="match status" value="1"/>
</dbReference>
<dbReference type="Gene3D" id="3.40.630.10">
    <property type="entry name" value="Zn peptidases"/>
    <property type="match status" value="1"/>
</dbReference>
<dbReference type="HAMAP" id="MF_00181">
    <property type="entry name" value="Cytosol_peptidase_M17"/>
    <property type="match status" value="1"/>
</dbReference>
<dbReference type="InterPro" id="IPR011356">
    <property type="entry name" value="Leucine_aapep/pepB"/>
</dbReference>
<dbReference type="InterPro" id="IPR043472">
    <property type="entry name" value="Macro_dom-like"/>
</dbReference>
<dbReference type="InterPro" id="IPR000819">
    <property type="entry name" value="Peptidase_M17_C"/>
</dbReference>
<dbReference type="InterPro" id="IPR023042">
    <property type="entry name" value="Peptidase_M17_leu_NH2_pept"/>
</dbReference>
<dbReference type="InterPro" id="IPR008283">
    <property type="entry name" value="Peptidase_M17_N"/>
</dbReference>
<dbReference type="NCBIfam" id="NF002072">
    <property type="entry name" value="PRK00913.1-1"/>
    <property type="match status" value="1"/>
</dbReference>
<dbReference type="NCBIfam" id="NF002074">
    <property type="entry name" value="PRK00913.1-4"/>
    <property type="match status" value="1"/>
</dbReference>
<dbReference type="PANTHER" id="PTHR11963:SF23">
    <property type="entry name" value="CYTOSOL AMINOPEPTIDASE"/>
    <property type="match status" value="1"/>
</dbReference>
<dbReference type="PANTHER" id="PTHR11963">
    <property type="entry name" value="LEUCINE AMINOPEPTIDASE-RELATED"/>
    <property type="match status" value="1"/>
</dbReference>
<dbReference type="Pfam" id="PF00883">
    <property type="entry name" value="Peptidase_M17"/>
    <property type="match status" value="1"/>
</dbReference>
<dbReference type="Pfam" id="PF02789">
    <property type="entry name" value="Peptidase_M17_N"/>
    <property type="match status" value="1"/>
</dbReference>
<dbReference type="PRINTS" id="PR00481">
    <property type="entry name" value="LAMNOPPTDASE"/>
</dbReference>
<dbReference type="SUPFAM" id="SSF52949">
    <property type="entry name" value="Macro domain-like"/>
    <property type="match status" value="1"/>
</dbReference>
<dbReference type="SUPFAM" id="SSF53187">
    <property type="entry name" value="Zn-dependent exopeptidases"/>
    <property type="match status" value="1"/>
</dbReference>
<dbReference type="PROSITE" id="PS00631">
    <property type="entry name" value="CYTOSOL_AP"/>
    <property type="match status" value="1"/>
</dbReference>
<organism>
    <name type="scientific">Edwardsiella ictaluri (strain 93-146)</name>
    <dbReference type="NCBI Taxonomy" id="634503"/>
    <lineage>
        <taxon>Bacteria</taxon>
        <taxon>Pseudomonadati</taxon>
        <taxon>Pseudomonadota</taxon>
        <taxon>Gammaproteobacteria</taxon>
        <taxon>Enterobacterales</taxon>
        <taxon>Hafniaceae</taxon>
        <taxon>Edwardsiella</taxon>
    </lineage>
</organism>
<evidence type="ECO:0000255" key="1">
    <source>
        <dbReference type="HAMAP-Rule" id="MF_00181"/>
    </source>
</evidence>